<sequence length="631" mass="72310">MSKSHAAYIDYALRRTTNMPVEMMGSDVVRLKDYQHFVARVFLGLDSMHSLLLFHETGVGKTMTTVYILKHLKDIYTNWAIILLVKKALIEDPWMNTILRYAPEITKDCIFINYDDQNFRNKFFTNIKTINSKSRICVIIDECHNFISKSLIKEDGKIRPTRSVYNFLSKTIALKNHKMICLSATPIVNSVQEFTMLVNLLRPGSLQHQSLFENKRLVDEKELVSKLGGLCSYIVNNEFSIFDDVEGSASFAKKTVLMRYVNMSKKQEEIYQKAKLAEIKTGISSFRILRRMATTFTFDSFPERQNRDPGEYAQEIATLYNDFKNSLRDREFSKSALDTFKRGELLGGDASAADISLFTELKEKSVKFIDVCLGILASHGKCLVFEPFVNQSGIEILLLYFKVFGISNIEFSSRTKDTRIKAVAEFNQESNTNGECIKTCVFSSSGGEGISFFSINDIFILDMTWNEASLRQIVGRAIRLNSHVLTPPERRYVNVHFIMARLSNGMPTVDEDLFEIIQSKSKEFVQLFRVFKHTSLEWIHANEKDFSPIDNESGWKTLVSRAIDLSSNKNITNKLIEGTNIWYSNSNRLMSINRGFKGVDGRVYDVDGNYLHDMPDNPVIKIHDGKLIYIF</sequence>
<proteinExistence type="evidence at protein level"/>
<name>NTP1_VACCW</name>
<gene>
    <name type="primary">OPG123</name>
    <name type="synonym">NPH1</name>
    <name type="ordered locus">VACWR116</name>
    <name type="ORF">D11L</name>
</gene>
<comment type="function">
    <text evidence="5 7 8">DNA-dependent ATPase that acts as a 5' to 3' translocase on single-stranded DNA and thereby plays a role in transcription termination of viral early genes (PubMed:27189950). Uses forward translocation in concert with the viral RNA polymerase RAP94/OPG109 subunit and the capping enzyme/VTF to catalyze release of UUUUUNU-containing nascent RNA from the elongation complex (PubMed:22069335). In addition, acts as a positive elongation factor to assist transcription through problematic sequences (PubMed:9472022).</text>
</comment>
<comment type="catalytic activity">
    <reaction evidence="7">
        <text>a ribonucleoside 5'-triphosphate + H2O = a ribonucleoside 5'-diphosphate + phosphate + H(+)</text>
        <dbReference type="Rhea" id="RHEA:23680"/>
        <dbReference type="ChEBI" id="CHEBI:15377"/>
        <dbReference type="ChEBI" id="CHEBI:15378"/>
        <dbReference type="ChEBI" id="CHEBI:43474"/>
        <dbReference type="ChEBI" id="CHEBI:57930"/>
        <dbReference type="ChEBI" id="CHEBI:61557"/>
        <dbReference type="EC" id="3.6.1.15"/>
    </reaction>
</comment>
<comment type="subunit">
    <text evidence="3 4 5">Monomer. Interacts (via C-terminus) with RAP94/OPG109 (via N-terminus) (PubMed:10833518, PubMed:11279216). Interacts with the cap-specific mRNA (nucleoside-2'-O-)-methyltransferase OPG102 (PubMed:11162828).</text>
</comment>
<comment type="subcellular location">
    <subcellularLocation>
        <location evidence="6">Virion</location>
    </subcellularLocation>
    <text>Virion core enzyme.</text>
</comment>
<comment type="similarity">
    <text evidence="10">Belongs to the helicase family. NPH I subfamily.</text>
</comment>
<organismHost>
    <name type="scientific">Bos taurus</name>
    <name type="common">Bovine</name>
    <dbReference type="NCBI Taxonomy" id="9913"/>
</organismHost>
<dbReference type="EC" id="3.6.1.15" evidence="7"/>
<dbReference type="EMBL" id="M14629">
    <property type="protein sequence ID" value="AAA48301.1"/>
    <property type="molecule type" value="Genomic_DNA"/>
</dbReference>
<dbReference type="EMBL" id="M15058">
    <property type="protein sequence ID" value="AAA48267.1"/>
    <property type="molecule type" value="Genomic_DNA"/>
</dbReference>
<dbReference type="EMBL" id="AY243312">
    <property type="protein sequence ID" value="AAO89395.1"/>
    <property type="molecule type" value="Genomic_DNA"/>
</dbReference>
<dbReference type="EMBL" id="X03729">
    <property type="protein sequence ID" value="CAA27370.1"/>
    <property type="molecule type" value="Genomic_DNA"/>
</dbReference>
<dbReference type="PIR" id="A94144">
    <property type="entry name" value="NPVZ17"/>
</dbReference>
<dbReference type="RefSeq" id="YP_232998.1">
    <property type="nucleotide sequence ID" value="NC_006998.1"/>
</dbReference>
<dbReference type="PDB" id="8C8H">
    <property type="method" value="EM"/>
    <property type="resolution" value="3.84 A"/>
    <property type="chains" value="Y=1-631"/>
</dbReference>
<dbReference type="PDBsum" id="8C8H"/>
<dbReference type="EMDB" id="EMD-16476"/>
<dbReference type="SMR" id="P05807"/>
<dbReference type="DNASU" id="3707708"/>
<dbReference type="GeneID" id="3707708"/>
<dbReference type="KEGG" id="vg:3707708"/>
<dbReference type="BRENDA" id="3.6.1.15">
    <property type="organism ID" value="6591"/>
</dbReference>
<dbReference type="Proteomes" id="UP000000344">
    <property type="component" value="Genome"/>
</dbReference>
<dbReference type="GO" id="GO:0044423">
    <property type="term" value="C:virion component"/>
    <property type="evidence" value="ECO:0007669"/>
    <property type="project" value="UniProtKB-KW"/>
</dbReference>
<dbReference type="GO" id="GO:0005524">
    <property type="term" value="F:ATP binding"/>
    <property type="evidence" value="ECO:0007669"/>
    <property type="project" value="UniProtKB-KW"/>
</dbReference>
<dbReference type="GO" id="GO:0003677">
    <property type="term" value="F:DNA binding"/>
    <property type="evidence" value="ECO:0007669"/>
    <property type="project" value="UniProtKB-KW"/>
</dbReference>
<dbReference type="GO" id="GO:0017111">
    <property type="term" value="F:ribonucleoside triphosphate phosphatase activity"/>
    <property type="evidence" value="ECO:0007669"/>
    <property type="project" value="UniProtKB-EC"/>
</dbReference>
<dbReference type="GO" id="GO:0006351">
    <property type="term" value="P:DNA-templated transcription"/>
    <property type="evidence" value="ECO:0007669"/>
    <property type="project" value="InterPro"/>
</dbReference>
<dbReference type="CDD" id="cd18785">
    <property type="entry name" value="SF2_C"/>
    <property type="match status" value="1"/>
</dbReference>
<dbReference type="Gene3D" id="3.40.50.300">
    <property type="entry name" value="P-loop containing nucleotide triphosphate hydrolases"/>
    <property type="match status" value="2"/>
</dbReference>
<dbReference type="InterPro" id="IPR014001">
    <property type="entry name" value="Helicase_ATP-bd"/>
</dbReference>
<dbReference type="InterPro" id="IPR001650">
    <property type="entry name" value="Helicase_C-like"/>
</dbReference>
<dbReference type="InterPro" id="IPR013676">
    <property type="entry name" value="NPHI_C"/>
</dbReference>
<dbReference type="InterPro" id="IPR027417">
    <property type="entry name" value="P-loop_NTPase"/>
</dbReference>
<dbReference type="InterPro" id="IPR000330">
    <property type="entry name" value="SNF2_N"/>
</dbReference>
<dbReference type="PANTHER" id="PTHR10799">
    <property type="entry name" value="SNF2/RAD54 HELICASE FAMILY"/>
    <property type="match status" value="1"/>
</dbReference>
<dbReference type="Pfam" id="PF00271">
    <property type="entry name" value="Helicase_C"/>
    <property type="match status" value="1"/>
</dbReference>
<dbReference type="Pfam" id="PF08469">
    <property type="entry name" value="NPHI_C"/>
    <property type="match status" value="1"/>
</dbReference>
<dbReference type="Pfam" id="PF00176">
    <property type="entry name" value="SNF2-rel_dom"/>
    <property type="match status" value="1"/>
</dbReference>
<dbReference type="SMART" id="SM00487">
    <property type="entry name" value="DEXDc"/>
    <property type="match status" value="1"/>
</dbReference>
<dbReference type="SMART" id="SM00490">
    <property type="entry name" value="HELICc"/>
    <property type="match status" value="1"/>
</dbReference>
<dbReference type="SUPFAM" id="SSF52540">
    <property type="entry name" value="P-loop containing nucleoside triphosphate hydrolases"/>
    <property type="match status" value="2"/>
</dbReference>
<dbReference type="PROSITE" id="PS51192">
    <property type="entry name" value="HELICASE_ATP_BIND_1"/>
    <property type="match status" value="1"/>
</dbReference>
<dbReference type="PROSITE" id="PS51194">
    <property type="entry name" value="HELICASE_CTER"/>
    <property type="match status" value="1"/>
</dbReference>
<accession>P05807</accession>
<accession>P04313</accession>
<accession>P04317</accession>
<accession>Q76ZR6</accession>
<accession>Q84138</accession>
<feature type="chain" id="PRO_0000099092" description="Nucleoside triphosphatase I">
    <location>
        <begin position="1"/>
        <end position="631"/>
    </location>
</feature>
<feature type="domain" description="Helicase ATP-binding" evidence="1">
    <location>
        <begin position="42"/>
        <end position="204"/>
    </location>
</feature>
<feature type="domain" description="Helicase C-terminal" evidence="2">
    <location>
        <begin position="367"/>
        <end position="532"/>
    </location>
</feature>
<feature type="region of interest" description="Binding to the cap-specific mRNA (nucleoside-2'-O-)-methyltransferase">
    <location>
        <begin position="457"/>
        <end position="524"/>
    </location>
</feature>
<feature type="short sequence motif" description="DEXH box">
    <location>
        <begin position="141"/>
        <end position="144"/>
    </location>
</feature>
<feature type="binding site">
    <location>
        <begin position="55"/>
        <end position="62"/>
    </location>
    <ligand>
        <name>ATP</name>
        <dbReference type="ChEBI" id="CHEBI:30616"/>
    </ligand>
</feature>
<feature type="mutagenesis site" description="Almost complete loss of ATP hydrolysis." evidence="7 9">
    <original>K</original>
    <variation>A</variation>
    <variation>R</variation>
    <variation>Q</variation>
    <location>
        <position position="61"/>
    </location>
</feature>
<feature type="mutagenesis site" description="Almost complete loss of ATP hydrolysis." evidence="9">
    <original>T</original>
    <variation>A</variation>
    <variation>V</variation>
    <location>
        <position position="62"/>
    </location>
</feature>
<feature type="mutagenesis site" description="No loss of ATP hydrolysis." evidence="9">
    <original>T</original>
    <variation>S</variation>
    <location>
        <position position="62"/>
    </location>
</feature>
<feature type="mutagenesis site" description="Almost complete loss of ATP hydrolysis." evidence="9">
    <original>D</original>
    <variation>A</variation>
    <variation>N</variation>
    <location>
        <position position="141"/>
    </location>
</feature>
<feature type="mutagenesis site" description="50% loss of ATP hydrolysis." evidence="9">
    <original>D</original>
    <variation>E</variation>
    <location>
        <position position="141"/>
    </location>
</feature>
<feature type="mutagenesis site" description="Almost complete loss of ATP hydrolysis." evidence="9">
    <original>E</original>
    <variation>A</variation>
    <variation>D</variation>
    <variation>Q</variation>
    <location>
        <position position="142"/>
    </location>
</feature>
<feature type="mutagenesis site" description="Almost complete loss of ATP hydrolysis." evidence="9">
    <original>H</original>
    <variation>A</variation>
    <variation>D</variation>
    <variation>N</variation>
    <location>
        <position position="144"/>
    </location>
</feature>
<feature type="mutagenesis site" description="50% loss of ATP hydrolysis." evidence="9">
    <original>H</original>
    <variation>Q</variation>
    <location>
        <position position="144"/>
    </location>
</feature>
<feature type="mutagenesis site" description="Almost complete loss of ATP hydrolysis." evidence="9">
    <original>N</original>
    <variation>A</variation>
    <variation>E</variation>
    <location>
        <position position="145"/>
    </location>
</feature>
<feature type="mutagenesis site" description="30% loss of ATP hydrolysis." evidence="9">
    <original>N</original>
    <variation>D</variation>
    <location>
        <position position="145"/>
    </location>
</feature>
<feature type="mutagenesis site" description="No effect on ATP hydrolysis." evidence="9">
    <original>N</original>
    <variation>Q</variation>
    <location>
        <position position="145"/>
    </location>
</feature>
<feature type="mutagenesis site" description="80% loss of ATP hydrolysis." evidence="9">
    <original>S</original>
    <variation>A</variation>
    <location>
        <position position="183"/>
    </location>
</feature>
<feature type="mutagenesis site" description="50% loss of ATP hydrolysis." evidence="9">
    <original>T</original>
    <variation>A</variation>
    <location>
        <position position="185"/>
    </location>
</feature>
<feature type="mutagenesis site" description="Almost complete loss of ATP hydrolysis." evidence="9">
    <original>Q</original>
    <variation>A</variation>
    <variation>N</variation>
    <location>
        <position position="472"/>
    </location>
</feature>
<feature type="mutagenesis site" description="80% loss of ATP hydrolysis." evidence="9">
    <original>Q</original>
    <variation>H</variation>
    <location>
        <position position="472"/>
    </location>
</feature>
<feature type="mutagenesis site" description="Loss ATP hydrolysis." evidence="9">
    <original>R</original>
    <variation>A</variation>
    <variation>K</variation>
    <location>
        <position position="476"/>
    </location>
</feature>
<feature type="mutagenesis site" description="Loss ATP hydrolysis." evidence="9">
    <original>R</original>
    <variation>A</variation>
    <variation>K</variation>
    <location>
        <position position="479"/>
    </location>
</feature>
<keyword id="KW-0002">3D-structure</keyword>
<keyword id="KW-0067">ATP-binding</keyword>
<keyword id="KW-0238">DNA-binding</keyword>
<keyword id="KW-0378">Hydrolase</keyword>
<keyword id="KW-0426">Late protein</keyword>
<keyword id="KW-0547">Nucleotide-binding</keyword>
<keyword id="KW-1185">Reference proteome</keyword>
<keyword id="KW-0804">Transcription</keyword>
<keyword id="KW-0946">Virion</keyword>
<protein>
    <recommendedName>
        <fullName>Nucleoside triphosphatase I</fullName>
        <ecNumber evidence="7">3.6.1.15</ecNumber>
    </recommendedName>
    <alternativeName>
        <fullName>Factor X</fullName>
    </alternativeName>
    <alternativeName>
        <fullName>NPH-I</fullName>
    </alternativeName>
    <alternativeName>
        <fullName>Nucleoside triphosphate phosphohydrolase I</fullName>
        <shortName>NPH I</shortName>
    </alternativeName>
</protein>
<organism>
    <name type="scientific">Vaccinia virus (strain Western Reserve)</name>
    <name type="common">VACV</name>
    <name type="synonym">Vaccinia virus (strain WR)</name>
    <dbReference type="NCBI Taxonomy" id="10254"/>
    <lineage>
        <taxon>Viruses</taxon>
        <taxon>Varidnaviria</taxon>
        <taxon>Bamfordvirae</taxon>
        <taxon>Nucleocytoviricota</taxon>
        <taxon>Pokkesviricetes</taxon>
        <taxon>Chitovirales</taxon>
        <taxon>Poxviridae</taxon>
        <taxon>Chordopoxvirinae</taxon>
        <taxon>Orthopoxvirus</taxon>
        <taxon>Vaccinia virus</taxon>
    </lineage>
</organism>
<reference key="1">
    <citation type="journal article" date="1986" name="Proc. Natl. Acad. Sci. U.S.A.">
        <title>Molecular cloning, encoding sequence, and expression of vaccinia virus nucleic acid-dependent nucleoside triphosphatase gene.</title>
        <authorList>
            <person name="Rodriguez J.F."/>
            <person name="Kahn J.S."/>
            <person name="Esteban M."/>
        </authorList>
    </citation>
    <scope>NUCLEOTIDE SEQUENCE [GENOMIC DNA]</scope>
</reference>
<reference key="2">
    <citation type="journal article" date="1986" name="Virology">
        <title>Nucleotide sequence and genetic map of the 16-kb vaccinia virus HindIII D fragment.</title>
        <authorList>
            <person name="Niles E.G."/>
            <person name="Condit R.C."/>
            <person name="Caro P."/>
            <person name="Davidson K."/>
            <person name="Matusick L."/>
            <person name="Seto J."/>
        </authorList>
    </citation>
    <scope>NUCLEOTIDE SEQUENCE [GENOMIC DNA]</scope>
</reference>
<reference key="3">
    <citation type="submission" date="1988-02" db="PIR data bank">
        <authorList>
            <person name="Niles E.G."/>
        </authorList>
    </citation>
    <scope>SEQUENCE REVISION</scope>
</reference>
<reference key="4">
    <citation type="submission" date="2003-02" db="EMBL/GenBank/DDBJ databases">
        <title>Sequencing of the coding region of Vaccinia-WR to an average 9-fold redundancy and an error rate of 0.16/10kb.</title>
        <authorList>
            <person name="Esposito J.J."/>
            <person name="Frace A.M."/>
            <person name="Sammons S.A."/>
            <person name="Olsen-Rasmussen M."/>
            <person name="Osborne J."/>
            <person name="Wohlhueter R."/>
        </authorList>
    </citation>
    <scope>NUCLEOTIDE SEQUENCE [LARGE SCALE GENOMIC DNA]</scope>
</reference>
<reference key="5">
    <citation type="journal article" date="1986" name="Nucleic Acids Res.">
        <title>A tandemly-oriented late gene cluster within the vaccinia virus genome.</title>
        <authorList>
            <person name="Weinrich S.L."/>
            <person name="Hruby D.E."/>
        </authorList>
    </citation>
    <scope>NUCLEOTIDE SEQUENCE [GENOMIC DNA] OF 1-288</scope>
</reference>
<reference key="6">
    <citation type="journal article" date="1998" name="Genes Dev.">
        <title>Vaccinia NPH-I, a DExH-box ATPase, is the energy coupling factor for mRNA transcription termination.</title>
        <authorList>
            <person name="Deng L."/>
            <person name="Shuman S."/>
        </authorList>
    </citation>
    <scope>CHARACTERIZATION</scope>
    <scope>DNA-BINDING</scope>
    <scope>FUNCTION</scope>
</reference>
<reference key="7">
    <citation type="journal article" date="1999" name="J. Virol.">
        <title>Mutational analysis of vaccinia virus nucleoside triphosphate phosphohydrolase I, a DNA-dependent ATPase of the DExH box family.</title>
        <authorList>
            <person name="Martins A."/>
            <person name="Gross C.H."/>
            <person name="Shuman S."/>
        </authorList>
    </citation>
    <scope>MUTAGENESIS OF LYS-61; THR-62; ASP-141; GLU-142; HIS-144; ASN-145; SER-183; THR-185; GLN-472; ARG-476 AND ARG-479</scope>
</reference>
<reference key="8">
    <citation type="journal article" date="2000" name="J. Biol. Chem.">
        <title>Interaction between nucleoside triphosphate phosphohydrolase I and the H4L subunit of the viral RNA polymerase is required for vaccinia virus early gene transcript release.</title>
        <authorList>
            <person name="Mohamed M.R."/>
            <person name="Niles E.G."/>
        </authorList>
    </citation>
    <scope>INTERACTION WITH RAP94/OPG109</scope>
</reference>
<reference key="9">
    <citation type="journal article" date="2001" name="J. Biol. Chem.">
        <title>The viral RNA polymerase H4L subunit is required for Vaccinia virus early gene transcription termination.</title>
        <authorList>
            <person name="Mohamed M.R."/>
            <person name="Niles E.G."/>
        </authorList>
    </citation>
    <scope>FUNCTION</scope>
    <scope>INTERACTION WITH RAP94/OPG109</scope>
</reference>
<reference key="10">
    <citation type="journal article" date="2001" name="Virology">
        <title>Interaction between the J3R subunit of vaccinia virus poly(A) polymerase and the H4L subunit of the viral RNA polymerase.</title>
        <authorList>
            <person name="Mohamed M.R."/>
            <person name="Latner D.R."/>
            <person name="Condit R.C."/>
            <person name="Niles E.G."/>
        </authorList>
    </citation>
    <scope>INTERACTION WITH OPG102</scope>
</reference>
<reference key="11">
    <citation type="journal article" date="2006" name="J. Virol.">
        <title>Vaccinia virus proteome: identification of proteins in vaccinia virus intracellular mature virion particles.</title>
        <authorList>
            <person name="Chung C.S."/>
            <person name="Chen C.H."/>
            <person name="Ho M.Y."/>
            <person name="Huang C.Y."/>
            <person name="Liao C.L."/>
            <person name="Chang W."/>
        </authorList>
    </citation>
    <scope>SUBCELLULAR LOCATION</scope>
</reference>
<reference key="12">
    <citation type="journal article" date="2011" name="J. Biol. Chem.">
        <title>Role of forward translocation in nucleoside triphosphate phosphohydrolase I (NPH I)-mediated transcription termination of vaccinia virus early genes.</title>
        <authorList>
            <person name="Tate J."/>
            <person name="Gollnick P."/>
        </authorList>
    </citation>
    <scope>FUNCTION</scope>
    <scope>MUTAGENESIS OF LYS-61</scope>
    <scope>CATALYTIC ACTIVITY</scope>
</reference>
<reference key="13">
    <citation type="journal article" date="2016" name="J. Biol. Chem.">
        <title>Nucleoside Triphosphate Phosphohydrolase I (NPH I) Functions as a 5' to 3' Translocase in Transcription Termination of Vaccinia Early Genes.</title>
        <authorList>
            <person name="Hindman R."/>
            <person name="Gollnick P."/>
        </authorList>
    </citation>
    <scope>FUNCTION</scope>
</reference>
<evidence type="ECO:0000255" key="1">
    <source>
        <dbReference type="PROSITE-ProRule" id="PRU00541"/>
    </source>
</evidence>
<evidence type="ECO:0000255" key="2">
    <source>
        <dbReference type="PROSITE-ProRule" id="PRU00542"/>
    </source>
</evidence>
<evidence type="ECO:0000269" key="3">
    <source>
    </source>
</evidence>
<evidence type="ECO:0000269" key="4">
    <source>
    </source>
</evidence>
<evidence type="ECO:0000269" key="5">
    <source>
    </source>
</evidence>
<evidence type="ECO:0000269" key="6">
    <source>
    </source>
</evidence>
<evidence type="ECO:0000269" key="7">
    <source>
    </source>
</evidence>
<evidence type="ECO:0000269" key="8">
    <source>
    </source>
</evidence>
<evidence type="ECO:0000269" key="9">
    <source>
    </source>
</evidence>
<evidence type="ECO:0000305" key="10"/>